<proteinExistence type="evidence at protein level"/>
<keyword id="KW-0002">3D-structure</keyword>
<keyword id="KW-0007">Acetylation</keyword>
<keyword id="KW-0025">Alternative splicing</keyword>
<keyword id="KW-0963">Cytoplasm</keyword>
<keyword id="KW-0967">Endosome</keyword>
<keyword id="KW-0945">Host-virus interaction</keyword>
<keyword id="KW-0472">Membrane</keyword>
<keyword id="KW-0479">Metal-binding</keyword>
<keyword id="KW-0653">Protein transport</keyword>
<keyword id="KW-1267">Proteomics identification</keyword>
<keyword id="KW-1185">Reference proteome</keyword>
<keyword id="KW-0813">Transport</keyword>
<keyword id="KW-0862">Zinc</keyword>
<reference key="1">
    <citation type="journal article" date="2000" name="Biochem. Biophys. Res. Commun.">
        <title>Human homologues of yeast vacuolar protein sorting 29 and 35.</title>
        <authorList>
            <person name="Edgar A.J."/>
            <person name="Polak J.M."/>
        </authorList>
    </citation>
    <scope>NUCLEOTIDE SEQUENCE [MRNA] (ISOFORMS 1 AND 2)</scope>
    <source>
        <tissue>Lung</tissue>
    </source>
</reference>
<reference key="2">
    <citation type="journal article" date="2000" name="Mol. Biol. Cell">
        <title>Human orthologs of yeast vacuolar protein sorting proteins Vps26, 29, and 35: assembly into multimeric complexes.</title>
        <authorList>
            <person name="Renfrew Haft C."/>
            <person name="de la Luz Sierra M."/>
            <person name="Bafford R."/>
            <person name="Lesniak M.A."/>
            <person name="Barr V.A."/>
            <person name="Taylor S.I."/>
        </authorList>
    </citation>
    <scope>NUCLEOTIDE SEQUENCE [MRNA] (ISOFORM 1)</scope>
    <scope>INTERACTION WITH VPS26A; VPS35; SNX1 AND SNX2</scope>
    <source>
        <tissue>Parathyroid</tissue>
    </source>
</reference>
<reference key="3">
    <citation type="submission" date="1999-11" db="EMBL/GenBank/DDBJ databases">
        <title>Novel genes expressed in hematopoietic stem/progenitor cells from myelodysplastic syndrome patients.</title>
        <authorList>
            <person name="Huang C."/>
            <person name="Zhang C."/>
            <person name="Tu Y."/>
            <person name="Gu W."/>
            <person name="Wang Y."/>
            <person name="Han Z."/>
            <person name="Chen Z."/>
            <person name="Zhou J."/>
            <person name="Gu J."/>
            <person name="Huang Q."/>
            <person name="Yu Y."/>
            <person name="Xu S."/>
            <person name="Ren S."/>
            <person name="Fu G."/>
            <person name="Li N."/>
        </authorList>
    </citation>
    <scope>NUCLEOTIDE SEQUENCE [LARGE SCALE MRNA] (ISOFORM 2)</scope>
    <source>
        <tissue>Hematopoietic stem cell</tissue>
    </source>
</reference>
<reference key="4">
    <citation type="submission" date="1999-11" db="EMBL/GenBank/DDBJ databases">
        <title>Novel genes expressed in human dendritic cells.</title>
        <authorList>
            <person name="Peng Y."/>
            <person name="Li Y."/>
            <person name="Tu Y."/>
            <person name="Xu S."/>
            <person name="Han Z."/>
            <person name="Fu G."/>
            <person name="Chen Z."/>
        </authorList>
    </citation>
    <scope>NUCLEOTIDE SEQUENCE [LARGE SCALE MRNA] (ISOFORM 1)</scope>
    <source>
        <tissue>Dendritic cell</tissue>
    </source>
</reference>
<reference key="5">
    <citation type="journal article" date="2001" name="Genome Res.">
        <title>Towards a catalog of human genes and proteins: sequencing and analysis of 500 novel complete protein coding human cDNAs.</title>
        <authorList>
            <person name="Wiemann S."/>
            <person name="Weil B."/>
            <person name="Wellenreuther R."/>
            <person name="Gassenhuber J."/>
            <person name="Glassl S."/>
            <person name="Ansorge W."/>
            <person name="Boecher M."/>
            <person name="Bloecker H."/>
            <person name="Bauersachs S."/>
            <person name="Blum H."/>
            <person name="Lauber J."/>
            <person name="Duesterhoeft A."/>
            <person name="Beyer A."/>
            <person name="Koehrer K."/>
            <person name="Strack N."/>
            <person name="Mewes H.-W."/>
            <person name="Ottenwaelder B."/>
            <person name="Obermaier B."/>
            <person name="Tampe J."/>
            <person name="Heubner D."/>
            <person name="Wambutt R."/>
            <person name="Korn B."/>
            <person name="Klein M."/>
            <person name="Poustka A."/>
        </authorList>
    </citation>
    <scope>NUCLEOTIDE SEQUENCE [LARGE SCALE MRNA] (ISOFORM 1)</scope>
    <source>
        <tissue>Fetal brain</tissue>
    </source>
</reference>
<reference key="6">
    <citation type="submission" date="2004-06" db="EMBL/GenBank/DDBJ databases">
        <title>Cloning of human full open reading frames in Gateway(TM) system entry vector (pDONR201).</title>
        <authorList>
            <person name="Ebert L."/>
            <person name="Schick M."/>
            <person name="Neubert P."/>
            <person name="Schatten R."/>
            <person name="Henze S."/>
            <person name="Korn B."/>
        </authorList>
    </citation>
    <scope>NUCLEOTIDE SEQUENCE [LARGE SCALE MRNA] (ISOFORMS 1 AND 2)</scope>
</reference>
<reference key="7">
    <citation type="journal article" date="2004" name="Genome Res.">
        <title>The status, quality, and expansion of the NIH full-length cDNA project: the Mammalian Gene Collection (MGC).</title>
        <authorList>
            <consortium name="The MGC Project Team"/>
        </authorList>
    </citation>
    <scope>NUCLEOTIDE SEQUENCE [LARGE SCALE MRNA] (ISOFORMS 1 AND 2)</scope>
    <source>
        <tissue>Brain</tissue>
        <tissue>Cervix</tissue>
    </source>
</reference>
<reference key="8">
    <citation type="journal article" date="2004" name="Nat. Cell Biol.">
        <title>The mammalian retromer regulates transcytosis of the polymeric immunoglobulin receptor.</title>
        <authorList>
            <person name="Verges M."/>
            <person name="Luton F."/>
            <person name="Gruber C."/>
            <person name="Tiemann F."/>
            <person name="Reinders L.G."/>
            <person name="Huang L."/>
            <person name="Burlingame A.L."/>
            <person name="Haft C.R."/>
            <person name="Mostov K.E."/>
        </authorList>
    </citation>
    <scope>FUNCTION</scope>
</reference>
<reference key="9">
    <citation type="journal article" date="2006" name="Biochem. J.">
        <title>The human Vps29 retromer component is a metallo-phosphoesterase for a cation-independent mannose 6-phosphate receptor substrate peptide.</title>
        <authorList>
            <person name="Damen E."/>
            <person name="Krieger E."/>
            <person name="Nielsen J.E."/>
            <person name="Eygensteyn J."/>
            <person name="van Leeuwen J.E.M."/>
        </authorList>
    </citation>
    <scope>CAUTION</scope>
    <scope>MUTAGENESIS OF ASP-8; ASN-39; ASP-62; HIS-86 AND HIS-117</scope>
    <scope>SUBUNIT</scope>
</reference>
<reference key="10">
    <citation type="journal article" date="2009" name="Science">
        <title>Lysine acetylation targets protein complexes and co-regulates major cellular functions.</title>
        <authorList>
            <person name="Choudhary C."/>
            <person name="Kumar C."/>
            <person name="Gnad F."/>
            <person name="Nielsen M.L."/>
            <person name="Rehman M."/>
            <person name="Walther T.C."/>
            <person name="Olsen J.V."/>
            <person name="Mann M."/>
        </authorList>
    </citation>
    <scope>ACETYLATION [LARGE SCALE ANALYSIS] AT LYS-50</scope>
    <scope>IDENTIFICATION BY MASS SPECTROMETRY [LARGE SCALE ANALYSIS]</scope>
</reference>
<reference key="11">
    <citation type="journal article" date="2010" name="J. Cell Sci.">
        <title>The cargo-selective retromer complex is a recruiting hub for protein complexes that regulate endosomal tubule dynamics.</title>
        <authorList>
            <person name="Harbour M.E."/>
            <person name="Breusegem S.Y."/>
            <person name="Antrobus R."/>
            <person name="Freeman C."/>
            <person name="Reid E."/>
            <person name="Seaman M.N."/>
        </authorList>
    </citation>
    <scope>INTERACTION WITH TBC1D5</scope>
    <scope>MUTAGENESIS OF LEU-152</scope>
</reference>
<reference key="12">
    <citation type="journal article" date="2011" name="BMC Syst. Biol.">
        <title>Initial characterization of the human central proteome.</title>
        <authorList>
            <person name="Burkard T.R."/>
            <person name="Planyavsky M."/>
            <person name="Kaupe I."/>
            <person name="Breitwieser F.P."/>
            <person name="Buerckstuemmer T."/>
            <person name="Bennett K.L."/>
            <person name="Superti-Furga G."/>
            <person name="Colinge J."/>
        </authorList>
    </citation>
    <scope>IDENTIFICATION BY MASS SPECTROMETRY [LARGE SCALE ANALYSIS]</scope>
</reference>
<reference key="13">
    <citation type="journal article" date="2011" name="Nat. Cell Biol.">
        <title>A SNX3-dependent retromer pathway mediates retrograde transport of the Wnt sorting receptor Wntless and is required for Wnt secretion.</title>
        <authorList>
            <person name="Harterink M."/>
            <person name="Port F."/>
            <person name="Lorenowicz M.J."/>
            <person name="McGough I.J."/>
            <person name="Silhankova M."/>
            <person name="Betist M.C."/>
            <person name="van Weering J.R."/>
            <person name="van Heesbeen R.G."/>
            <person name="Middelkoop T.C."/>
            <person name="Basler K."/>
            <person name="Cullen P.J."/>
            <person name="Korswagen H.C."/>
        </authorList>
    </citation>
    <scope>FUNCTION OF THE SNX3-RETROMER</scope>
    <scope>SUBUNIT</scope>
</reference>
<reference key="14">
    <citation type="journal article" date="2011" name="PLoS ONE">
        <title>VPS29 is not an active metallo-phosphatase but is a rigid scaffold required for retromer interaction with accessory proteins.</title>
        <authorList>
            <person name="Swarbrick J.D."/>
            <person name="Shaw D.J."/>
            <person name="Chhabra S."/>
            <person name="Ghai R."/>
            <person name="Valkov E."/>
            <person name="Norwood S.J."/>
            <person name="Seaman M.N."/>
            <person name="Collins B.M."/>
        </authorList>
    </citation>
    <scope>LACK OF PHOSPHATASE ACTIVITY</scope>
</reference>
<reference key="15">
    <citation type="journal article" date="2013" name="Biol. Cell">
        <title>Endosomal recruitment of the WASH complex: active sequences and mutations impairing interaction with the retromer.</title>
        <authorList>
            <person name="Helfer E."/>
            <person name="Harbour M.E."/>
            <person name="Henriot V."/>
            <person name="Lakisic G."/>
            <person name="Sousa-Blin C."/>
            <person name="Volceanov L."/>
            <person name="Seaman M.N."/>
            <person name="Gautreau A."/>
        </authorList>
    </citation>
    <scope>INTERACTION WITH VPS35</scope>
    <scope>MUTAGENESIS OF VAL-90 AND ILE-91</scope>
</reference>
<reference key="16">
    <citation type="journal article" date="2013" name="Nat. Cell Biol.">
        <title>A global analysis of SNX27-retromer assembly and cargo specificity reveals a function in glucose and metal ion transport.</title>
        <authorList>
            <person name="Steinberg F."/>
            <person name="Gallon M."/>
            <person name="Winfield M."/>
            <person name="Thomas E.C."/>
            <person name="Bell A.J."/>
            <person name="Heesom K.J."/>
            <person name="Tavare J.M."/>
            <person name="Cullen P.J."/>
        </authorList>
    </citation>
    <scope>INTERACTION WITH SNX27 AND WASHC5</scope>
    <scope>SUBUNIT</scope>
    <scope>FUNCTION OF THE SNX27-RETROMER</scope>
</reference>
<reference key="17">
    <citation type="journal article" date="2014" name="Dev. Cell">
        <title>VARP is recruited on to endosomes by direct interaction with retromer, where together they function in export to the cell surface.</title>
        <authorList>
            <person name="Hesketh G.G."/>
            <person name="Perez-Dorado I."/>
            <person name="Jackson L.P."/>
            <person name="Wartosch L."/>
            <person name="Schafer I.B."/>
            <person name="Gray S.R."/>
            <person name="McCoy A.J."/>
            <person name="Zeldin O.B."/>
            <person name="Garman E.F."/>
            <person name="Harbour M.E."/>
            <person name="Evans P.R."/>
            <person name="Seaman M.N."/>
            <person name="Luzio J.P."/>
            <person name="Owen D.J."/>
        </authorList>
    </citation>
    <scope>FUNCTION</scope>
</reference>
<reference key="18">
    <citation type="journal article" date="2014" name="J. Proteomics">
        <title>An enzyme assisted RP-RPLC approach for in-depth analysis of human liver phosphoproteome.</title>
        <authorList>
            <person name="Bian Y."/>
            <person name="Song C."/>
            <person name="Cheng K."/>
            <person name="Dong M."/>
            <person name="Wang F."/>
            <person name="Huang J."/>
            <person name="Sun D."/>
            <person name="Wang L."/>
            <person name="Ye M."/>
            <person name="Zou H."/>
        </authorList>
    </citation>
    <scope>IDENTIFICATION BY MASS SPECTROMETRY [LARGE SCALE ANALYSIS]</scope>
    <source>
        <tissue>Liver</tissue>
    </source>
</reference>
<reference key="19">
    <citation type="journal article" date="2015" name="Proteomics">
        <title>N-terminome analysis of the human mitochondrial proteome.</title>
        <authorList>
            <person name="Vaca Jacome A.S."/>
            <person name="Rabilloud T."/>
            <person name="Schaeffer-Reiss C."/>
            <person name="Rompais M."/>
            <person name="Ayoub D."/>
            <person name="Lane L."/>
            <person name="Bairoch A."/>
            <person name="Van Dorsselaer A."/>
            <person name="Carapito C."/>
        </authorList>
    </citation>
    <scope>IDENTIFICATION BY MASS SPECTROMETRY [LARGE SCALE ANALYSIS]</scope>
</reference>
<reference key="20">
    <citation type="journal article" date="2015" name="PLoS Pathog.">
        <title>Direct binding of retromer to human papillomavirus type 16 minor capsid protein L2 mediates endosome exit during viral infection.</title>
        <authorList>
            <person name="Popa A."/>
            <person name="Zhang W."/>
            <person name="Harrison M.S."/>
            <person name="Goodner K."/>
            <person name="Kazakov T."/>
            <person name="Goodwin E.C."/>
            <person name="Lipovsky A."/>
            <person name="Burd C.G."/>
            <person name="DiMaio D."/>
        </authorList>
    </citation>
    <scope>INTERACTION WITH HUMAN PAPILLOMAVIRUS 16 MINOR CAPSID PROTEIN L2 (MICROBIAL INFECTION)</scope>
    <scope>FUNCTION (MICROBIAL INFECTION)</scope>
</reference>
<reference key="21">
    <citation type="journal article" date="2017" name="Nat. Cell Biol.">
        <title>Retriever is a multiprotein complex for retromer-independent endosomal cargo recycling.</title>
        <authorList>
            <person name="McNally K.E."/>
            <person name="Faulkner R."/>
            <person name="Steinberg F."/>
            <person name="Gallon M."/>
            <person name="Ghai R."/>
            <person name="Pim D."/>
            <person name="Langton P."/>
            <person name="Pearson N."/>
            <person name="Danson C.M."/>
            <person name="Naegele H."/>
            <person name="Morris L.L."/>
            <person name="Singla A."/>
            <person name="Overlee B.L."/>
            <person name="Heesom K.J."/>
            <person name="Sessions R."/>
            <person name="Banks L."/>
            <person name="Collins B.M."/>
            <person name="Berger I."/>
            <person name="Billadeau D.D."/>
            <person name="Burstein E."/>
            <person name="Cullen P.J."/>
        </authorList>
    </citation>
    <scope>FUNCTION</scope>
    <scope>IDENTIFICATION IN THE RETROMER COMPLEX</scope>
    <scope>IDENTIFICATION IN THE RETRIEVER COMPLEX</scope>
</reference>
<reference key="22">
    <citation type="journal article" date="2018" name="Nat. Commun.">
        <title>SNX3-retromer requires an evolutionary conserved MON2:DOPEY2:ATP9A complex to mediate Wntless sorting and Wnt secretion.</title>
        <authorList>
            <person name="McGough I.J."/>
            <person name="de Groot R.E.A."/>
            <person name="Jellett A.P."/>
            <person name="Betist M.C."/>
            <person name="Varandas K.C."/>
            <person name="Danson C.M."/>
            <person name="Heesom K.J."/>
            <person name="Korswagen H.C."/>
            <person name="Cullen P.J."/>
        </authorList>
    </citation>
    <scope>INTERACTION WITH SNX3</scope>
    <scope>IDENTIFICATION BY MASS SPECTROMETRY</scope>
</reference>
<reference key="23">
    <citation type="journal article" date="2020" name="J. Med. Genet.">
        <title>Biallelic VPS35L pathogenic variants cause 3C/Ritscher-Schinzel-like syndrome through dysfunction of retriever complex.</title>
        <authorList>
            <person name="Kato K."/>
            <person name="Oka Y."/>
            <person name="Muramatsu H."/>
            <person name="Vasilev F.F."/>
            <person name="Otomo T."/>
            <person name="Oishi H."/>
            <person name="Kawano Y."/>
            <person name="Kidokoro H."/>
            <person name="Nakazawa Y."/>
            <person name="Ogi T."/>
            <person name="Takahashi Y."/>
            <person name="Saitoh S."/>
        </authorList>
    </citation>
    <scope>INTERACTION WITH VPS35L</scope>
</reference>
<reference evidence="29" key="24">
    <citation type="journal article" date="2005" name="J. Biol. Chem.">
        <title>Crystal structure of human vacuolar protein sorting protein 29 reveals a phosphodiesterase/nuclease-like fold and two protein-protein interaction sites.</title>
        <authorList>
            <person name="Wang D."/>
            <person name="Guo M."/>
            <person name="Liang Z."/>
            <person name="Fan J."/>
            <person name="Zhu Z."/>
            <person name="Zang J."/>
            <person name="Zhu Z."/>
            <person name="Li X."/>
            <person name="Teng M."/>
            <person name="Niu L."/>
            <person name="Dong Y."/>
            <person name="Liu P."/>
        </authorList>
    </citation>
    <scope>X-RAY CRYSTALLOGRAPHY (2.1 ANGSTROMS)</scope>
    <scope>METAL-BINDING</scope>
</reference>
<reference evidence="30" key="25">
    <citation type="journal article" date="2007" name="Nature">
        <title>Functional architecture of the retromer cargo-recognition complex.</title>
        <authorList>
            <person name="Hierro A."/>
            <person name="Rojas A.L."/>
            <person name="Rojas R."/>
            <person name="Murthy N."/>
            <person name="Effantin G."/>
            <person name="Kajava A.V."/>
            <person name="Steven A.C."/>
            <person name="Bonifacino J.S."/>
            <person name="Hurley J.H."/>
        </authorList>
    </citation>
    <scope>X-RAY CRYSTALLOGRAPHY (2.8 ANGSTROMS) IN COMPLEX WITH VPS35</scope>
    <scope>ELECTRON MICROSCOPY OF THE RETROMER COMPLEX CONTAINING VPS29; VPS35 AND VPS26</scope>
</reference>
<reference evidence="31" key="26">
    <citation type="journal article" date="2023" name="Cell">
        <title>Structure of the endosomal commander complex linked to Ritscher-Schinzel syndrome.</title>
        <authorList>
            <person name="Healy M.D."/>
            <person name="McNally K.E."/>
            <person name="Butkovic R."/>
            <person name="Chilton M."/>
            <person name="Kato K."/>
            <person name="Sacharz J."/>
            <person name="McConville C."/>
            <person name="Moody E.R.R."/>
            <person name="Shaw S."/>
            <person name="Planelles-Herrero V.J."/>
            <person name="Yadav S.K.N."/>
            <person name="Ross J."/>
            <person name="Borucu U."/>
            <person name="Palmer C.S."/>
            <person name="Chen K.E."/>
            <person name="Croll T.I."/>
            <person name="Hall R.J."/>
            <person name="Caruana N.J."/>
            <person name="Ghai R."/>
            <person name="Nguyen T.H.D."/>
            <person name="Heesom K.J."/>
            <person name="Saitoh S."/>
            <person name="Berger I."/>
            <person name="Schaffitzel C."/>
            <person name="Williams T.A."/>
            <person name="Stroud D.A."/>
            <person name="Derivery E."/>
            <person name="Collins B.M."/>
            <person name="Cullen P.J."/>
        </authorList>
    </citation>
    <scope>X-RAY CRYSTALLOGRAPHY (1.35 ANGSTROMS) IN COMPLEX WITH VPS35L</scope>
    <scope>FUNCTION</scope>
    <scope>SUBUNIT</scope>
    <scope>MUTAGENESIS OF LEU-67; ILE-91; TRP-93; LEU-152 AND VAL-174</scope>
</reference>
<reference evidence="37" key="27">
    <citation type="journal article" date="2024" name="Nat. Commun.">
        <title>Structural basis for Retriever-SNX17 assembly and endosomal sorting.</title>
        <authorList>
            <person name="Singla A."/>
            <person name="Boesch D.J."/>
            <person name="Fung H.Y.J."/>
            <person name="Ngoka C."/>
            <person name="Enriquez A.S."/>
            <person name="Song R."/>
            <person name="Kramer D.A."/>
            <person name="Han Y."/>
            <person name="Banarer E."/>
            <person name="Lemoff A."/>
            <person name="Juneja P."/>
            <person name="Billadeau D.D."/>
            <person name="Bai X."/>
            <person name="Chen Z."/>
            <person name="Turer E.E."/>
            <person name="Burstein E."/>
            <person name="Chen B."/>
        </authorList>
    </citation>
    <scope>STRUCTURE BY ELECTRON MICROSCOPY (3.40 ANGSTROMS) OF 2-182 IN COMPLEX WITH SNX17</scope>
    <scope>FUNCTION</scope>
    <scope>SUBUNIT</scope>
    <scope>INTERACTION WITH SNX17</scope>
</reference>
<reference evidence="34 35 36" key="28">
    <citation type="journal article" date="2024" name="Nat. Struct. Mol. Biol.">
        <title>Structural organization of the retriever-CCC endosomal recycling complex.</title>
        <authorList>
            <person name="Boesch D.J."/>
            <person name="Singla A."/>
            <person name="Han Y."/>
            <person name="Kramer D.A."/>
            <person name="Liu Q."/>
            <person name="Suzuki K."/>
            <person name="Juneja P."/>
            <person name="Zhao X."/>
            <person name="Long X."/>
            <person name="Medlyn M.J."/>
            <person name="Billadeau D.D."/>
            <person name="Chen Z."/>
            <person name="Chen B."/>
            <person name="Burstein E."/>
        </authorList>
    </citation>
    <scope>STRUCTURE BY ELECTRON MICROSCOPY (2.94 ANGSTROMS) OF THE RETRIEVER COMPLEX</scope>
    <scope>FUNCTION</scope>
    <scope>SUBUNIT</scope>
    <scope>MUTAGENESIS OF TYR-165</scope>
</reference>
<reference evidence="32 33" key="29">
    <citation type="journal article" date="2024" name="Nat. Struct. Mol. Biol.">
        <title>Structure and interactions of the endogenous human commander complex.</title>
        <authorList>
            <person name="Laulumaa S."/>
            <person name="Kumpula E.P."/>
            <person name="Huiskonen J.T."/>
            <person name="Varjosalo M."/>
        </authorList>
    </citation>
    <scope>STRUCTURE BY ELECTRON MICROSCOPY (6.50 ANGSTROMS) OF THE RETRIEVER COMPLEX IN COMPLEX WITH DENND10; CCDC22 AND CCDC93</scope>
    <scope>FUNCTION</scope>
    <scope>SUBUNIT</scope>
</reference>
<gene>
    <name evidence="24 28" type="primary">VPS29</name>
    <name type="ORF">DC15</name>
    <name type="ORF">DC7</name>
    <name type="ORF">MDS007</name>
</gene>
<dbReference type="EMBL" id="AF193795">
    <property type="protein sequence ID" value="AAF04596.1"/>
    <property type="molecule type" value="mRNA"/>
</dbReference>
<dbReference type="EMBL" id="AF175264">
    <property type="protein sequence ID" value="AAF89952.1"/>
    <property type="molecule type" value="mRNA"/>
</dbReference>
<dbReference type="EMBL" id="AF168716">
    <property type="protein sequence ID" value="AAF87318.1"/>
    <property type="molecule type" value="mRNA"/>
</dbReference>
<dbReference type="EMBL" id="AF201936">
    <property type="protein sequence ID" value="AAF86872.1"/>
    <property type="molecule type" value="mRNA"/>
</dbReference>
<dbReference type="EMBL" id="AF201946">
    <property type="protein sequence ID" value="AAF17238.1"/>
    <property type="molecule type" value="mRNA"/>
</dbReference>
<dbReference type="EMBL" id="AL136614">
    <property type="protein sequence ID" value="CAB66549.1"/>
    <property type="molecule type" value="mRNA"/>
</dbReference>
<dbReference type="EMBL" id="CR457182">
    <property type="protein sequence ID" value="CAG33463.1"/>
    <property type="molecule type" value="mRNA"/>
</dbReference>
<dbReference type="EMBL" id="CR533468">
    <property type="protein sequence ID" value="CAG38499.1"/>
    <property type="molecule type" value="mRNA"/>
</dbReference>
<dbReference type="EMBL" id="BC000880">
    <property type="protein sequence ID" value="AAH00880.1"/>
    <property type="molecule type" value="mRNA"/>
</dbReference>
<dbReference type="EMBL" id="BC095446">
    <property type="protein sequence ID" value="AAH95446.1"/>
    <property type="molecule type" value="mRNA"/>
</dbReference>
<dbReference type="CCDS" id="CCDS41832.1">
    <molecule id="Q9UBQ0-1"/>
</dbReference>
<dbReference type="CCDS" id="CCDS53832.1">
    <molecule id="Q9UBQ0-2"/>
</dbReference>
<dbReference type="PIR" id="JC7515">
    <property type="entry name" value="JC7515"/>
</dbReference>
<dbReference type="RefSeq" id="NP_057310.1">
    <molecule id="Q9UBQ0-1"/>
    <property type="nucleotide sequence ID" value="NM_016226.5"/>
</dbReference>
<dbReference type="RefSeq" id="NP_476528.1">
    <molecule id="Q9UBQ0-2"/>
    <property type="nucleotide sequence ID" value="NM_057180.3"/>
</dbReference>
<dbReference type="PDB" id="1W24">
    <property type="method" value="X-ray"/>
    <property type="resolution" value="2.10 A"/>
    <property type="chains" value="A=1-182"/>
</dbReference>
<dbReference type="PDB" id="2R17">
    <property type="method" value="X-ray"/>
    <property type="resolution" value="2.80 A"/>
    <property type="chains" value="A/B=1-182"/>
</dbReference>
<dbReference type="PDB" id="5GTU">
    <property type="method" value="X-ray"/>
    <property type="resolution" value="1.50 A"/>
    <property type="chains" value="A=2-182"/>
</dbReference>
<dbReference type="PDB" id="5OSH">
    <property type="method" value="X-ray"/>
    <property type="resolution" value="4.30 A"/>
    <property type="chains" value="A/D/G/J=1-182"/>
</dbReference>
<dbReference type="PDB" id="5OSI">
    <property type="method" value="X-ray"/>
    <property type="resolution" value="2.52 A"/>
    <property type="chains" value="A/D/G/J=1-182"/>
</dbReference>
<dbReference type="PDB" id="5WYH">
    <property type="method" value="X-ray"/>
    <property type="resolution" value="2.46 A"/>
    <property type="chains" value="A/C=2-182"/>
</dbReference>
<dbReference type="PDB" id="6XS5">
    <property type="method" value="X-ray"/>
    <property type="resolution" value="2.01 A"/>
    <property type="chains" value="A=1-182"/>
</dbReference>
<dbReference type="PDB" id="6XS7">
    <property type="method" value="X-ray"/>
    <property type="resolution" value="1.58 A"/>
    <property type="chains" value="A=1-182"/>
</dbReference>
<dbReference type="PDB" id="6XS9">
    <property type="method" value="X-ray"/>
    <property type="resolution" value="2.69 A"/>
    <property type="chains" value="A/B=1-182"/>
</dbReference>
<dbReference type="PDB" id="6XSA">
    <property type="method" value="X-ray"/>
    <property type="resolution" value="1.83 A"/>
    <property type="chains" value="A=1-182"/>
</dbReference>
<dbReference type="PDB" id="7BLN">
    <property type="method" value="EM"/>
    <property type="resolution" value="8.90 A"/>
    <property type="chains" value="B/D=1-182"/>
</dbReference>
<dbReference type="PDB" id="8ESE">
    <property type="method" value="X-ray"/>
    <property type="resolution" value="1.35 A"/>
    <property type="chains" value="Z=1-182"/>
</dbReference>
<dbReference type="PDB" id="8P0V">
    <property type="method" value="EM"/>
    <property type="resolution" value="6.50 A"/>
    <property type="chains" value="N=1-182"/>
</dbReference>
<dbReference type="PDB" id="8P0X">
    <property type="method" value="EM"/>
    <property type="resolution" value="7.50 A"/>
    <property type="chains" value="N=1-182"/>
</dbReference>
<dbReference type="PDB" id="8R02">
    <property type="method" value="X-ray"/>
    <property type="resolution" value="2.50 A"/>
    <property type="chains" value="A/B=1-182"/>
</dbReference>
<dbReference type="PDB" id="8R0J">
    <property type="method" value="X-ray"/>
    <property type="resolution" value="2.40 A"/>
    <property type="chains" value="A/B=1-182"/>
</dbReference>
<dbReference type="PDB" id="8RKS">
    <property type="method" value="X-ray"/>
    <property type="resolution" value="3.10 A"/>
    <property type="chains" value="A/C/E/G=1-182"/>
</dbReference>
<dbReference type="PDB" id="8SYM">
    <property type="method" value="EM"/>
    <property type="resolution" value="3.20 A"/>
    <property type="chains" value="B=2-182"/>
</dbReference>
<dbReference type="PDB" id="8SYN">
    <property type="method" value="EM"/>
    <property type="resolution" value="2.94 A"/>
    <property type="chains" value="B=2-182"/>
</dbReference>
<dbReference type="PDB" id="8SYO">
    <property type="method" value="EM"/>
    <property type="resolution" value="2.94 A"/>
    <property type="chains" value="B=2-182"/>
</dbReference>
<dbReference type="PDB" id="9AU7">
    <property type="method" value="EM"/>
    <property type="resolution" value="3.40 A"/>
    <property type="chains" value="B=2-182"/>
</dbReference>
<dbReference type="PDBsum" id="1W24"/>
<dbReference type="PDBsum" id="2R17"/>
<dbReference type="PDBsum" id="5GTU"/>
<dbReference type="PDBsum" id="5OSH"/>
<dbReference type="PDBsum" id="5OSI"/>
<dbReference type="PDBsum" id="5WYH"/>
<dbReference type="PDBsum" id="6XS5"/>
<dbReference type="PDBsum" id="6XS7"/>
<dbReference type="PDBsum" id="6XS9"/>
<dbReference type="PDBsum" id="6XSA"/>
<dbReference type="PDBsum" id="7BLN"/>
<dbReference type="PDBsum" id="8ESE"/>
<dbReference type="PDBsum" id="8P0V"/>
<dbReference type="PDBsum" id="8P0X"/>
<dbReference type="PDBsum" id="8R02"/>
<dbReference type="PDBsum" id="8R0J"/>
<dbReference type="PDBsum" id="8RKS"/>
<dbReference type="PDBsum" id="8SYM"/>
<dbReference type="PDBsum" id="8SYN"/>
<dbReference type="PDBsum" id="8SYO"/>
<dbReference type="PDBsum" id="9AU7"/>
<dbReference type="EMDB" id="EMD-12220"/>
<dbReference type="EMDB" id="EMD-17339"/>
<dbReference type="EMDB" id="EMD-17341"/>
<dbReference type="EMDB" id="EMD-17342"/>
<dbReference type="EMDB" id="EMD-40884"/>
<dbReference type="EMDB" id="EMD-40885"/>
<dbReference type="EMDB" id="EMD-40886"/>
<dbReference type="EMDB" id="EMD-43872"/>
<dbReference type="SASBDB" id="Q9UBQ0"/>
<dbReference type="SMR" id="Q9UBQ0"/>
<dbReference type="BioGRID" id="119683">
    <property type="interactions" value="146"/>
</dbReference>
<dbReference type="ComplexPortal" id="CPX-2211">
    <property type="entry name" value="Commander complex"/>
</dbReference>
<dbReference type="ComplexPortal" id="CPX-7842">
    <property type="entry name" value="Retromer complex, VPS26A variant"/>
</dbReference>
<dbReference type="ComplexPortal" id="CPX-7843">
    <property type="entry name" value="Retromer complex, VPS26B variant"/>
</dbReference>
<dbReference type="CORUM" id="Q9UBQ0"/>
<dbReference type="DIP" id="DIP-29077N"/>
<dbReference type="FunCoup" id="Q9UBQ0">
    <property type="interactions" value="3917"/>
</dbReference>
<dbReference type="IntAct" id="Q9UBQ0">
    <property type="interactions" value="94"/>
</dbReference>
<dbReference type="MINT" id="Q9UBQ0"/>
<dbReference type="STRING" id="9606.ENSP00000480853"/>
<dbReference type="TCDB" id="9.A.3.1.1">
    <property type="family name" value="the sorting nexin27 (snx27)-retromer assembly apparatus (retromeraa) family"/>
</dbReference>
<dbReference type="TCDB" id="9.A.3.1.2">
    <property type="family name" value="the sorting nexin27 (snx27)-retromer assembly apparatus (retromeraa) family"/>
</dbReference>
<dbReference type="DEPOD" id="VPS29"/>
<dbReference type="GlyGen" id="Q9UBQ0">
    <property type="glycosylation" value="1 site, 1 O-linked glycan (1 site)"/>
</dbReference>
<dbReference type="iPTMnet" id="Q9UBQ0"/>
<dbReference type="MetOSite" id="Q9UBQ0"/>
<dbReference type="PhosphoSitePlus" id="Q9UBQ0"/>
<dbReference type="SwissPalm" id="Q9UBQ0"/>
<dbReference type="BioMuta" id="VPS29"/>
<dbReference type="DMDM" id="25453325"/>
<dbReference type="jPOST" id="Q9UBQ0"/>
<dbReference type="MassIVE" id="Q9UBQ0"/>
<dbReference type="PaxDb" id="9606-ENSP00000480853"/>
<dbReference type="PeptideAtlas" id="Q9UBQ0"/>
<dbReference type="PRIDE" id="Q9UBQ0"/>
<dbReference type="ProteomicsDB" id="84030">
    <molecule id="Q9UBQ0-1"/>
</dbReference>
<dbReference type="ProteomicsDB" id="84031">
    <molecule id="Q9UBQ0-2"/>
</dbReference>
<dbReference type="Pumba" id="Q9UBQ0"/>
<dbReference type="TopDownProteomics" id="Q9UBQ0-1">
    <molecule id="Q9UBQ0-1"/>
</dbReference>
<dbReference type="TopDownProteomics" id="Q9UBQ0-2">
    <molecule id="Q9UBQ0-2"/>
</dbReference>
<dbReference type="Antibodypedia" id="31016">
    <property type="antibodies" value="210 antibodies from 31 providers"/>
</dbReference>
<dbReference type="DNASU" id="51699"/>
<dbReference type="Ensembl" id="ENST00000360579.11">
    <molecule id="Q9UBQ0-2"/>
    <property type="protein sequence ID" value="ENSP00000353786.7"/>
    <property type="gene ID" value="ENSG00000111237.19"/>
</dbReference>
<dbReference type="Ensembl" id="ENST00000549578.6">
    <molecule id="Q9UBQ0-1"/>
    <property type="protein sequence ID" value="ENSP00000447058.1"/>
    <property type="gene ID" value="ENSG00000111237.19"/>
</dbReference>
<dbReference type="GeneID" id="51699"/>
<dbReference type="KEGG" id="hsa:51699"/>
<dbReference type="MANE-Select" id="ENST00000549578.6">
    <property type="protein sequence ID" value="ENSP00000447058.1"/>
    <property type="RefSeq nucleotide sequence ID" value="NM_016226.5"/>
    <property type="RefSeq protein sequence ID" value="NP_057310.1"/>
</dbReference>
<dbReference type="UCSC" id="uc001tqx.5">
    <molecule id="Q9UBQ0-1"/>
    <property type="organism name" value="human"/>
</dbReference>
<dbReference type="AGR" id="HGNC:14340"/>
<dbReference type="CTD" id="51699"/>
<dbReference type="DisGeNET" id="51699"/>
<dbReference type="GeneCards" id="VPS29"/>
<dbReference type="HGNC" id="HGNC:14340">
    <property type="gene designation" value="VPS29"/>
</dbReference>
<dbReference type="HPA" id="ENSG00000111237">
    <property type="expression patterns" value="Low tissue specificity"/>
</dbReference>
<dbReference type="MIM" id="606932">
    <property type="type" value="gene"/>
</dbReference>
<dbReference type="neXtProt" id="NX_Q9UBQ0"/>
<dbReference type="OpenTargets" id="ENSG00000111237"/>
<dbReference type="PharmGKB" id="PA37875"/>
<dbReference type="VEuPathDB" id="HostDB:ENSG00000111237"/>
<dbReference type="eggNOG" id="KOG3325">
    <property type="taxonomic scope" value="Eukaryota"/>
</dbReference>
<dbReference type="GeneTree" id="ENSGT00390000012669"/>
<dbReference type="HOGENOM" id="CLU_063749_0_1_1"/>
<dbReference type="InParanoid" id="Q9UBQ0"/>
<dbReference type="OMA" id="VRGNMDY"/>
<dbReference type="OrthoDB" id="10258130at2759"/>
<dbReference type="PAN-GO" id="Q9UBQ0">
    <property type="GO annotations" value="4 GO annotations based on evolutionary models"/>
</dbReference>
<dbReference type="PhylomeDB" id="Q9UBQ0"/>
<dbReference type="TreeFam" id="TF300880"/>
<dbReference type="PathwayCommons" id="Q9UBQ0"/>
<dbReference type="Reactome" id="R-HSA-3238698">
    <property type="pathway name" value="WNT ligand biogenesis and trafficking"/>
</dbReference>
<dbReference type="SignaLink" id="Q9UBQ0"/>
<dbReference type="BioGRID-ORCS" id="51699">
    <property type="hits" value="354 hits in 1194 CRISPR screens"/>
</dbReference>
<dbReference type="CD-CODE" id="FB4E32DD">
    <property type="entry name" value="Presynaptic clusters and postsynaptic densities"/>
</dbReference>
<dbReference type="ChiTaRS" id="VPS29">
    <property type="organism name" value="human"/>
</dbReference>
<dbReference type="EvolutionaryTrace" id="Q9UBQ0"/>
<dbReference type="GeneWiki" id="VPS29"/>
<dbReference type="GenomeRNAi" id="51699"/>
<dbReference type="Pharos" id="Q9UBQ0">
    <property type="development level" value="Tbio"/>
</dbReference>
<dbReference type="PRO" id="PR:Q9UBQ0"/>
<dbReference type="Proteomes" id="UP000005640">
    <property type="component" value="Chromosome 12"/>
</dbReference>
<dbReference type="RNAct" id="Q9UBQ0">
    <property type="molecule type" value="protein"/>
</dbReference>
<dbReference type="Bgee" id="ENSG00000111237">
    <property type="expression patterns" value="Expressed in monocyte and 182 other cell types or tissues"/>
</dbReference>
<dbReference type="ExpressionAtlas" id="Q9UBQ0">
    <property type="expression patterns" value="baseline and differential"/>
</dbReference>
<dbReference type="GO" id="GO:0005829">
    <property type="term" value="C:cytosol"/>
    <property type="evidence" value="ECO:0000314"/>
    <property type="project" value="HPA"/>
</dbReference>
<dbReference type="GO" id="GO:0005769">
    <property type="term" value="C:early endosome"/>
    <property type="evidence" value="ECO:0007669"/>
    <property type="project" value="UniProtKB-SubCell"/>
</dbReference>
<dbReference type="GO" id="GO:0005768">
    <property type="term" value="C:endosome"/>
    <property type="evidence" value="ECO:0000314"/>
    <property type="project" value="LIFEdb"/>
</dbReference>
<dbReference type="GO" id="GO:0010008">
    <property type="term" value="C:endosome membrane"/>
    <property type="evidence" value="ECO:0007669"/>
    <property type="project" value="UniProtKB-SubCell"/>
</dbReference>
<dbReference type="GO" id="GO:0043231">
    <property type="term" value="C:intracellular membrane-bounded organelle"/>
    <property type="evidence" value="ECO:0000314"/>
    <property type="project" value="HPA"/>
</dbReference>
<dbReference type="GO" id="GO:0005770">
    <property type="term" value="C:late endosome"/>
    <property type="evidence" value="ECO:0007669"/>
    <property type="project" value="UniProtKB-SubCell"/>
</dbReference>
<dbReference type="GO" id="GO:0030904">
    <property type="term" value="C:retromer complex"/>
    <property type="evidence" value="ECO:0000314"/>
    <property type="project" value="UniProtKB"/>
</dbReference>
<dbReference type="GO" id="GO:0030906">
    <property type="term" value="C:retromer, cargo-selective complex"/>
    <property type="evidence" value="ECO:0000314"/>
    <property type="project" value="ParkinsonsUK-UCL"/>
</dbReference>
<dbReference type="GO" id="GO:0046872">
    <property type="term" value="F:metal ion binding"/>
    <property type="evidence" value="ECO:0007669"/>
    <property type="project" value="UniProtKB-KW"/>
</dbReference>
<dbReference type="GO" id="GO:0032456">
    <property type="term" value="P:endocytic recycling"/>
    <property type="evidence" value="ECO:0000315"/>
    <property type="project" value="UniProtKB"/>
</dbReference>
<dbReference type="GO" id="GO:0006886">
    <property type="term" value="P:intracellular protein transport"/>
    <property type="evidence" value="ECO:0000318"/>
    <property type="project" value="GO_Central"/>
</dbReference>
<dbReference type="GO" id="GO:0042147">
    <property type="term" value="P:retrograde transport, endosome to Golgi"/>
    <property type="evidence" value="ECO:0000318"/>
    <property type="project" value="GO_Central"/>
</dbReference>
<dbReference type="CDD" id="cd07394">
    <property type="entry name" value="MPP_Vps29"/>
    <property type="match status" value="1"/>
</dbReference>
<dbReference type="FunFam" id="3.60.21.10:FF:000009">
    <property type="entry name" value="Vacuolar protein sorting-associated protein 29"/>
    <property type="match status" value="1"/>
</dbReference>
<dbReference type="Gene3D" id="3.60.21.10">
    <property type="match status" value="1"/>
</dbReference>
<dbReference type="InterPro" id="IPR024654">
    <property type="entry name" value="Calcineurin-like_PHP_lpxH"/>
</dbReference>
<dbReference type="InterPro" id="IPR029052">
    <property type="entry name" value="Metallo-depent_PP-like"/>
</dbReference>
<dbReference type="InterPro" id="IPR000979">
    <property type="entry name" value="Phosphodiesterase_MJ0936/Vps29"/>
</dbReference>
<dbReference type="InterPro" id="IPR028661">
    <property type="entry name" value="Vps29"/>
</dbReference>
<dbReference type="NCBIfam" id="TIGR00040">
    <property type="entry name" value="yfcE"/>
    <property type="match status" value="1"/>
</dbReference>
<dbReference type="PANTHER" id="PTHR11124">
    <property type="entry name" value="VACUOLAR SORTING PROTEIN VPS29"/>
    <property type="match status" value="1"/>
</dbReference>
<dbReference type="Pfam" id="PF12850">
    <property type="entry name" value="Metallophos_2"/>
    <property type="match status" value="1"/>
</dbReference>
<dbReference type="SUPFAM" id="SSF56300">
    <property type="entry name" value="Metallo-dependent phosphatases"/>
    <property type="match status" value="1"/>
</dbReference>
<sequence length="182" mass="20506">MLVLVLGDLHIPHRCNSLPAKFKKLLVPGKIQHILCTGNLCTKESYDYLKTLAGDVHIVRGDFDENLNYPEQKVVTVGQFKIGLIHGHQVIPWGDMASLALLQRQFDVDILISGHTHKFEAFEHENKFYINPGSATGAYNALETNIIPSFVLMDIQASTVVTYVYQLIGDDVKVERIEYKKP</sequence>
<evidence type="ECO:0000250" key="1"/>
<evidence type="ECO:0000250" key="2">
    <source>
        <dbReference type="UniProtKB" id="Q9QZ88"/>
    </source>
</evidence>
<evidence type="ECO:0000269" key="3">
    <source>
    </source>
</evidence>
<evidence type="ECO:0000269" key="4">
    <source>
    </source>
</evidence>
<evidence type="ECO:0000269" key="5">
    <source>
    </source>
</evidence>
<evidence type="ECO:0000269" key="6">
    <source>
    </source>
</evidence>
<evidence type="ECO:0000269" key="7">
    <source>
    </source>
</evidence>
<evidence type="ECO:0000269" key="8">
    <source>
    </source>
</evidence>
<evidence type="ECO:0000269" key="9">
    <source>
    </source>
</evidence>
<evidence type="ECO:0000269" key="10">
    <source>
    </source>
</evidence>
<evidence type="ECO:0000269" key="11">
    <source>
    </source>
</evidence>
<evidence type="ECO:0000269" key="12">
    <source>
    </source>
</evidence>
<evidence type="ECO:0000269" key="13">
    <source>
    </source>
</evidence>
<evidence type="ECO:0000269" key="14">
    <source>
    </source>
</evidence>
<evidence type="ECO:0000269" key="15">
    <source>
    </source>
</evidence>
<evidence type="ECO:0000269" key="16">
    <source>
    </source>
</evidence>
<evidence type="ECO:0000303" key="17">
    <source>
    </source>
</evidence>
<evidence type="ECO:0000303" key="18">
    <source>
    </source>
</evidence>
<evidence type="ECO:0000303" key="19">
    <source>
    </source>
</evidence>
<evidence type="ECO:0000303" key="20">
    <source>
    </source>
</evidence>
<evidence type="ECO:0000303" key="21">
    <source>
    </source>
</evidence>
<evidence type="ECO:0000303" key="22">
    <source>
    </source>
</evidence>
<evidence type="ECO:0000303" key="23">
    <source>
    </source>
</evidence>
<evidence type="ECO:0000303" key="24">
    <source>
    </source>
</evidence>
<evidence type="ECO:0000303" key="25">
    <source ref="3"/>
</evidence>
<evidence type="ECO:0000303" key="26">
    <source ref="6"/>
</evidence>
<evidence type="ECO:0000305" key="27"/>
<evidence type="ECO:0000312" key="28">
    <source>
        <dbReference type="HGNC" id="HGNC:14340"/>
    </source>
</evidence>
<evidence type="ECO:0007744" key="29">
    <source>
        <dbReference type="PDB" id="1W24"/>
    </source>
</evidence>
<evidence type="ECO:0007744" key="30">
    <source>
        <dbReference type="PDB" id="2R17"/>
    </source>
</evidence>
<evidence type="ECO:0007744" key="31">
    <source>
        <dbReference type="PDB" id="8ESE"/>
    </source>
</evidence>
<evidence type="ECO:0007744" key="32">
    <source>
        <dbReference type="PDB" id="8P0V"/>
    </source>
</evidence>
<evidence type="ECO:0007744" key="33">
    <source>
        <dbReference type="PDB" id="8P0X"/>
    </source>
</evidence>
<evidence type="ECO:0007744" key="34">
    <source>
        <dbReference type="PDB" id="8SYM"/>
    </source>
</evidence>
<evidence type="ECO:0007744" key="35">
    <source>
        <dbReference type="PDB" id="8SYN"/>
    </source>
</evidence>
<evidence type="ECO:0007744" key="36">
    <source>
        <dbReference type="PDB" id="8SYO"/>
    </source>
</evidence>
<evidence type="ECO:0007744" key="37">
    <source>
        <dbReference type="PDB" id="9AU7"/>
    </source>
</evidence>
<evidence type="ECO:0007744" key="38">
    <source>
    </source>
</evidence>
<evidence type="ECO:0007829" key="39">
    <source>
        <dbReference type="PDB" id="1W24"/>
    </source>
</evidence>
<evidence type="ECO:0007829" key="40">
    <source>
        <dbReference type="PDB" id="5OSI"/>
    </source>
</evidence>
<evidence type="ECO:0007829" key="41">
    <source>
        <dbReference type="PDB" id="6XS7"/>
    </source>
</evidence>
<evidence type="ECO:0007829" key="42">
    <source>
        <dbReference type="PDB" id="6XS9"/>
    </source>
</evidence>
<evidence type="ECO:0007829" key="43">
    <source>
        <dbReference type="PDB" id="6XSA"/>
    </source>
</evidence>
<evidence type="ECO:0007829" key="44">
    <source>
        <dbReference type="PDB" id="8ESE"/>
    </source>
</evidence>
<feature type="chain" id="PRO_0000065894" description="Vacuolar protein sorting-associated protein 29">
    <location>
        <begin position="1"/>
        <end position="182"/>
    </location>
</feature>
<feature type="binding site" evidence="1">
    <location>
        <position position="8"/>
    </location>
    <ligand>
        <name>Zn(2+)</name>
        <dbReference type="ChEBI" id="CHEBI:29105"/>
        <label>1</label>
    </ligand>
</feature>
<feature type="binding site" evidence="1">
    <location>
        <position position="10"/>
    </location>
    <ligand>
        <name>Zn(2+)</name>
        <dbReference type="ChEBI" id="CHEBI:29105"/>
        <label>1</label>
    </ligand>
</feature>
<feature type="binding site" evidence="1">
    <location>
        <position position="39"/>
    </location>
    <ligand>
        <name>Zn(2+)</name>
        <dbReference type="ChEBI" id="CHEBI:29105"/>
        <label>1</label>
    </ligand>
</feature>
<feature type="binding site" evidence="1">
    <location>
        <position position="39"/>
    </location>
    <ligand>
        <name>Zn(2+)</name>
        <dbReference type="ChEBI" id="CHEBI:29105"/>
        <label>2</label>
    </ligand>
</feature>
<feature type="binding site" evidence="1">
    <location>
        <position position="62"/>
    </location>
    <ligand>
        <name>Zn(2+)</name>
        <dbReference type="ChEBI" id="CHEBI:29105"/>
        <label>2</label>
    </ligand>
</feature>
<feature type="binding site" evidence="1">
    <location>
        <position position="86"/>
    </location>
    <ligand>
        <name>Zn(2+)</name>
        <dbReference type="ChEBI" id="CHEBI:29105"/>
        <label>2</label>
    </ligand>
</feature>
<feature type="binding site" evidence="1">
    <location>
        <position position="115"/>
    </location>
    <ligand>
        <name>Zn(2+)</name>
        <dbReference type="ChEBI" id="CHEBI:29105"/>
        <label>2</label>
    </ligand>
</feature>
<feature type="binding site" evidence="1">
    <location>
        <position position="117"/>
    </location>
    <ligand>
        <name>Zn(2+)</name>
        <dbReference type="ChEBI" id="CHEBI:29105"/>
        <label>1</label>
    </ligand>
</feature>
<feature type="modified residue" description="N6-acetyllysine" evidence="38">
    <location>
        <position position="50"/>
    </location>
</feature>
<feature type="splice variant" id="VSP_004073" description="In isoform 2." evidence="17 19 25 26">
    <original>M</original>
    <variation>MAGHR</variation>
    <location>
        <position position="1"/>
    </location>
</feature>
<feature type="mutagenesis site" description="Loss of in vitro protein phosphatase activity." evidence="4">
    <original>D</original>
    <variation>A</variation>
    <location>
        <position position="8"/>
    </location>
</feature>
<feature type="mutagenesis site" description="Loss of in vitro protein phosphatase activity." evidence="4">
    <original>N</original>
    <variation>A</variation>
    <location>
        <position position="39"/>
    </location>
</feature>
<feature type="mutagenesis site" description="No effect on in vitro protein phosphatase activity." evidence="4">
    <original>N</original>
    <variation>D</variation>
    <location>
        <position position="39"/>
    </location>
</feature>
<feature type="mutagenesis site" description="Loss of in vitro protein phosphatase activity." evidence="4">
    <original>D</original>
    <variation>A</variation>
    <variation>N</variation>
    <location>
        <position position="62"/>
    </location>
</feature>
<feature type="mutagenesis site" description="Impairs interaction with VPS35L." evidence="13">
    <original>L</original>
    <variation>D</variation>
    <location>
        <position position="67"/>
    </location>
</feature>
<feature type="mutagenesis site" description="Loss of in vitro protein phosphatase activity." evidence="4">
    <original>H</original>
    <variation>A</variation>
    <location>
        <position position="86"/>
    </location>
</feature>
<feature type="mutagenesis site" description="Impairs interaction with VPS35." evidence="7">
    <original>V</original>
    <variation>D</variation>
    <location>
        <position position="90"/>
    </location>
</feature>
<feature type="mutagenesis site" description="Impairs interaction with VPS35. Impairs interaction with VPS35L and CCC complex association." evidence="7 13">
    <original>I</original>
    <variation>D</variation>
    <location>
        <position position="91"/>
    </location>
</feature>
<feature type="mutagenesis site" description="Impairs interaction with VPS35L and CCC complex association." evidence="13">
    <original>W</original>
    <variation>A</variation>
    <location>
        <position position="93"/>
    </location>
</feature>
<feature type="mutagenesis site" description="Loss of in vitro protein phosphatase activity." evidence="4">
    <original>H</original>
    <variation>A</variation>
    <location>
        <position position="117"/>
    </location>
</feature>
<feature type="mutagenesis site" description="Impairs interaction with TBC1D5. Impairs interaction with VPS35L." evidence="6 13">
    <original>L</original>
    <variation>E</variation>
    <location>
        <position position="152"/>
    </location>
</feature>
<feature type="mutagenesis site" description="Impairs interaction with VPS35L." evidence="14">
    <original>Y</original>
    <variation>A</variation>
    <location>
        <position position="165"/>
    </location>
</feature>
<feature type="mutagenesis site" description="Impairs interaction with VPS35L." evidence="13">
    <original>V</original>
    <variation>D</variation>
    <location>
        <position position="174"/>
    </location>
</feature>
<feature type="sequence conflict" description="In Ref. 4; AAF86872." evidence="27" ref="4">
    <original>ML</original>
    <variation>MKIVLYPV</variation>
    <location>
        <begin position="1"/>
        <end position="2"/>
    </location>
</feature>
<feature type="sequence conflict" description="In Ref. 5; CAB66549 and 6; CAG38499." evidence="27" ref="5 6">
    <original>F</original>
    <variation>S</variation>
    <location>
        <position position="119"/>
    </location>
</feature>
<feature type="strand" evidence="44">
    <location>
        <begin position="1"/>
        <end position="6"/>
    </location>
</feature>
<feature type="turn" evidence="44">
    <location>
        <begin position="12"/>
        <end position="14"/>
    </location>
</feature>
<feature type="strand" evidence="42">
    <location>
        <begin position="16"/>
        <end position="18"/>
    </location>
</feature>
<feature type="helix" evidence="44">
    <location>
        <begin position="20"/>
        <end position="25"/>
    </location>
</feature>
<feature type="turn" evidence="41">
    <location>
        <begin position="28"/>
        <end position="30"/>
    </location>
</feature>
<feature type="strand" evidence="44">
    <location>
        <begin position="32"/>
        <end position="36"/>
    </location>
</feature>
<feature type="helix" evidence="44">
    <location>
        <begin position="43"/>
        <end position="52"/>
    </location>
</feature>
<feature type="strand" evidence="44">
    <location>
        <begin position="54"/>
        <end position="58"/>
    </location>
</feature>
<feature type="strand" evidence="40">
    <location>
        <begin position="67"/>
        <end position="69"/>
    </location>
</feature>
<feature type="strand" evidence="44">
    <location>
        <begin position="71"/>
        <end position="77"/>
    </location>
</feature>
<feature type="strand" evidence="44">
    <location>
        <begin position="80"/>
        <end position="85"/>
    </location>
</feature>
<feature type="strand" evidence="44">
    <location>
        <begin position="90"/>
        <end position="92"/>
    </location>
</feature>
<feature type="helix" evidence="44">
    <location>
        <begin position="96"/>
        <end position="106"/>
    </location>
</feature>
<feature type="strand" evidence="44">
    <location>
        <begin position="109"/>
        <end position="113"/>
    </location>
</feature>
<feature type="strand" evidence="39">
    <location>
        <begin position="115"/>
        <end position="118"/>
    </location>
</feature>
<feature type="strand" evidence="44">
    <location>
        <begin position="120"/>
        <end position="124"/>
    </location>
</feature>
<feature type="strand" evidence="44">
    <location>
        <begin position="127"/>
        <end position="131"/>
    </location>
</feature>
<feature type="strand" evidence="42">
    <location>
        <begin position="134"/>
        <end position="136"/>
    </location>
</feature>
<feature type="strand" evidence="43">
    <location>
        <begin position="141"/>
        <end position="145"/>
    </location>
</feature>
<feature type="strand" evidence="44">
    <location>
        <begin position="149"/>
        <end position="156"/>
    </location>
</feature>
<feature type="strand" evidence="44">
    <location>
        <begin position="159"/>
        <end position="168"/>
    </location>
</feature>
<feature type="strand" evidence="44">
    <location>
        <begin position="171"/>
        <end position="180"/>
    </location>
</feature>
<comment type="function">
    <text evidence="9 11 13 14 15 16 18 22 23">Component of the commander complex that is essential for endosomal recycling of transmembrane cargos; the commander complex is composed of the CCC subcomplex and the retriever subcomplex (PubMed:37172566, PubMed:39587083, PubMed:38062209, PubMed:38459129). Component of the retriever complex, which is a heterotrimeric complex related to retromer cargo-selective complex (CSC) and essential for retromer-independent retrieval and recycling of numerous cargos such as integrin alpha-5/beta-1 (ITGA5:ITGB1) (PubMed:28892079, PubMed:37172566, PubMed:39587083, PubMed:38062209, PubMed:38459129). Component of the retromer cargo-selective complex (CSC). The CSC is believed to be the core functional component of retromer or respective retromer complex variants acting to prevent missorting of selected transmembrane cargo proteins into the lysosomal degradation pathway. The recruitment of the CSC to the endosomal membrane involves RAB7A and SNX3. The SNX-BAR retromer mediates retrograde transport of cargo proteins from endosomes to the trans-Golgi network (TGN) and is involved in endosome-to-plasma membrane transport for cargo protein recycling. The SNX3-retromer mediates the retrograde endosome-to-TGN transport of WLS distinct from the SNX-BAR retromer pathway. The SNX27-retromer is believed to be involved in endosome-to-plasma membrane trafficking and recycling of a broad spectrum of cargo proteins. The CSC seems to act as recruitment hub for other proteins, such as the WASH complex and TBC1D5. Required to regulate transcytosis of the polymeric immunoglobulin receptor (pIgR-pIgA) (PubMed:15247922, PubMed:21725319, PubMed:23563491). In the endosomes, retriever complex drives the retrieval and recycling of NxxY-motif-containing cargo proteins by coupling to SNX17, a cargo essential for the homeostatic maintenance of numerous cell surface proteins associated with processes that include cell migration, cell adhesion, nutrient supply and cell signaling (PubMed:28892079, PubMed:39587083). The recruitment of the retriever complex to the endosomal membrane involves CCC and WASH complexes (PubMed:28892079). Involved in GLUT1 endosome-to-plasma membrane trafficking; the function is dependent of association with ANKRD27 (PubMed:24856514).</text>
</comment>
<comment type="function">
    <text evidence="10">(Microbial infection) The heterotrimeric retromer cargo-selective complex (CSC) mediates the exit of human papillomavirus from the early endosome and the delivery to the Golgi apparatus.</text>
</comment>
<comment type="subunit">
    <text evidence="2 3 4 5 6 7 8 11 12 14 15 16 22 23">Component of the commander complex consisting of the CCC subcomplex and the retriever subcomplex (PubMed:37172566, PubMed:28892079, PubMed:39587083, PubMed:38062209, PubMed:38459129). Component of the heterotrimeric retriever complex formed by VPS26C, VPS29 and VPS35L; within the complex interacts with VPS35L (PubMed:37172566, PubMed:28892079, PubMed:31712251, PubMed:39587083, PubMed:38062209, PubMed:38459129). Component of the heterotrimeric retromer cargo-selective complex (CSC), also described as vacuolar protein sorting subcomplex (VPS), formed by VPS26 (VPS26A or VPS26B), VPS29 and VPS35 (PubMed:11102511, PubMed:16737443, PubMed:17891154, PubMed:28892079). The CSC has a highly elongated structure with VPS26 and VPS29 binding independently at opposite distal ends of VPS35 as central platform (By similarity). The CSC is believed to associate with variable sorting nexins to form functionally distinct retromer complex variants. The originally described retromer complex (also called SNX-BAR retromer) is a pentamer containing the CSC and a heterodimeric membrane-deforming subcomplex formed between SNX1 or SNX2 and SNX5 or SNX6 (also called SNX-BAR subcomplex); the respective CSC and SNX-BAR subcomplexes associate with low affinity. The CSC associates with SNX3 to form a SNX3-retromer complex. The CSC associates with SNX27, the WASH complex and the SNX-BAR subcomplex to form the SNX27-retromer complex (PubMed:21725319, PubMed:23563491). Interacts with VPS26A, VPS35, SNX1, SNX2, SNX3, SNX27, WASHC5 (PubMed:11102511, PubMed:20923837, PubMed:23563491, PubMed:28892079, PubMed:30213940). Interacts with TBC1D5; this interaction is blocked by VPS35L in the retriever complex (PubMed:23331060, PubMed:37172566). Interacts with SNX17; the interaction is indirect; SNX17 (via its C-terminus) interacts with the retriever complex (via VPS26C and VPS35L) (PubMed:39587083). Interacts with VPS26B and ANKRD27 (By similarity).</text>
</comment>
<comment type="subunit">
    <text evidence="10">(Microbial infection) Interacts with human papillomavirus 16 minor capsid protein L2 (via C-terminus); this interaction mediates the transport of the capsid from the early endosome to the Golgi apparatus.</text>
</comment>
<comment type="interaction">
    <interactant intactId="EBI-718596">
        <id>Q9UBQ0</id>
    </interactant>
    <interactant intactId="EBI-10217641">
        <id>B9A6K1</id>
        <label>TBC1D5</label>
    </interactant>
    <organismsDiffer>false</organismsDiffer>
    <experiments>3</experiments>
</comment>
<comment type="interaction">
    <interactant intactId="EBI-718596">
        <id>Q9UBQ0</id>
    </interactant>
    <interactant intactId="EBI-742381">
        <id>Q92609</id>
        <label>TBC1D5</label>
    </interactant>
    <organismsDiffer>false</organismsDiffer>
    <experiments>11</experiments>
</comment>
<comment type="interaction">
    <interactant intactId="EBI-718596">
        <id>Q9UBQ0</id>
    </interactant>
    <interactant intactId="EBI-1043891">
        <id>O75436</id>
        <label>VPS26A</label>
    </interactant>
    <organismsDiffer>false</organismsDiffer>
    <experiments>13</experiments>
</comment>
<comment type="interaction">
    <interactant intactId="EBI-718596">
        <id>Q9UBQ0</id>
    </interactant>
    <interactant intactId="EBI-1054634">
        <id>Q96QK1</id>
        <label>VPS35</label>
    </interactant>
    <organismsDiffer>false</organismsDiffer>
    <experiments>26</experiments>
</comment>
<comment type="interaction">
    <interactant intactId="EBI-718596">
        <id>Q9UBQ0</id>
    </interactant>
    <interactant intactId="EBI-11080070">
        <id>Q7Z3J2</id>
        <label>VPS35L</label>
    </interactant>
    <organismsDiffer>false</organismsDiffer>
    <experiments>15</experiments>
</comment>
<comment type="interaction">
    <interactant intactId="EBI-11141397">
        <id>Q9UBQ0-2</id>
    </interactant>
    <interactant intactId="EBI-640741">
        <id>P01023</id>
        <label>A2M</label>
    </interactant>
    <organismsDiffer>false</organismsDiffer>
    <experiments>3</experiments>
</comment>
<comment type="interaction">
    <interactant intactId="EBI-11141397">
        <id>Q9UBQ0-2</id>
    </interactant>
    <interactant intactId="EBI-353944">
        <id>P60709</id>
        <label>ACTB</label>
    </interactant>
    <organismsDiffer>false</organismsDiffer>
    <experiments>3</experiments>
</comment>
<comment type="interaction">
    <interactant intactId="EBI-11141397">
        <id>Q9UBQ0-2</id>
    </interactant>
    <interactant intactId="EBI-74648">
        <id>P51693</id>
        <label>APLP1</label>
    </interactant>
    <organismsDiffer>false</organismsDiffer>
    <experiments>3</experiments>
</comment>
<comment type="interaction">
    <interactant intactId="EBI-11141397">
        <id>Q9UBQ0-2</id>
    </interactant>
    <interactant intactId="EBI-762076">
        <id>P21810</id>
        <label>BGN</label>
    </interactant>
    <organismsDiffer>false</organismsDiffer>
    <experiments>3</experiments>
</comment>
<comment type="interaction">
    <interactant intactId="EBI-11141397">
        <id>Q9UBQ0-2</id>
    </interactant>
    <interactant intactId="EBI-718504">
        <id>Q13867</id>
        <label>BLMH</label>
    </interactant>
    <organismsDiffer>false</organismsDiffer>
    <experiments>3</experiments>
</comment>
<comment type="interaction">
    <interactant intactId="EBI-11141397">
        <id>Q9UBQ0-2</id>
    </interactant>
    <interactant intactId="EBI-1383687">
        <id>Q9UQM7</id>
        <label>CAMK2A</label>
    </interactant>
    <organismsDiffer>false</organismsDiffer>
    <experiments>3</experiments>
</comment>
<comment type="interaction">
    <interactant intactId="EBI-11141397">
        <id>Q9UBQ0-2</id>
    </interactant>
    <interactant intactId="EBI-12248206">
        <id>P29466-3</id>
        <label>CASP1</label>
    </interactant>
    <organismsDiffer>false</organismsDiffer>
    <experiments>3</experiments>
</comment>
<comment type="interaction">
    <interactant intactId="EBI-11141397">
        <id>Q9UBQ0-2</id>
    </interactant>
    <interactant intactId="EBI-9087876">
        <id>P48730-2</id>
        <label>CSNK1D</label>
    </interactant>
    <organismsDiffer>false</organismsDiffer>
    <experiments>3</experiments>
</comment>
<comment type="interaction">
    <interactant intactId="EBI-11141397">
        <id>Q9UBQ0-2</id>
    </interactant>
    <interactant intactId="EBI-25840445">
        <id>O14576-2</id>
        <label>DYNC1I1</label>
    </interactant>
    <organismsDiffer>false</organismsDiffer>
    <experiments>3</experiments>
</comment>
<comment type="interaction">
    <interactant intactId="EBI-11141397">
        <id>Q9UBQ0-2</id>
    </interactant>
    <interactant intactId="EBI-515315">
        <id>P06241</id>
        <label>FYN</label>
    </interactant>
    <organismsDiffer>false</organismsDiffer>
    <experiments>3</experiments>
</comment>
<comment type="interaction">
    <interactant intactId="EBI-11141397">
        <id>Q9UBQ0-2</id>
    </interactant>
    <interactant intactId="EBI-352528">
        <id>P10809</id>
        <label>HSPD1</label>
    </interactant>
    <organismsDiffer>false</organismsDiffer>
    <experiments>3</experiments>
</comment>
<comment type="interaction">
    <interactant intactId="EBI-11141397">
        <id>Q9UBQ0-2</id>
    </interactant>
    <interactant intactId="EBI-25833471">
        <id>Q07954-2</id>
        <label>LRP1</label>
    </interactant>
    <organismsDiffer>false</organismsDiffer>
    <experiments>3</experiments>
</comment>
<comment type="interaction">
    <interactant intactId="EBI-11141397">
        <id>Q9UBQ0-2</id>
    </interactant>
    <interactant intactId="EBI-476263">
        <id>Q99683</id>
        <label>MAP3K5</label>
    </interactant>
    <organismsDiffer>false</organismsDiffer>
    <experiments>3</experiments>
</comment>
<comment type="interaction">
    <interactant intactId="EBI-11141397">
        <id>Q9UBQ0-2</id>
    </interactant>
    <interactant intactId="EBI-10178578">
        <id>I6L9F6</id>
        <label>NEFL</label>
    </interactant>
    <organismsDiffer>false</organismsDiffer>
    <experiments>3</experiments>
</comment>
<comment type="interaction">
    <interactant intactId="EBI-11141397">
        <id>Q9UBQ0-2</id>
    </interactant>
    <interactant intactId="EBI-1164361">
        <id>Q99497</id>
        <label>PARK7</label>
    </interactant>
    <organismsDiffer>false</organismsDiffer>
    <experiments>3</experiments>
</comment>
<comment type="interaction">
    <interactant intactId="EBI-11141397">
        <id>Q9UBQ0-2</id>
    </interactant>
    <interactant intactId="EBI-9090282">
        <id>P27986-2</id>
        <label>PIK3R1</label>
    </interactant>
    <organismsDiffer>false</organismsDiffer>
    <experiments>3</experiments>
</comment>
<comment type="interaction">
    <interactant intactId="EBI-11141397">
        <id>Q9UBQ0-2</id>
    </interactant>
    <interactant intactId="EBI-2846068">
        <id>Q9BXM7</id>
        <label>PINK1</label>
    </interactant>
    <organismsDiffer>false</organismsDiffer>
    <experiments>3</experiments>
</comment>
<comment type="interaction">
    <interactant intactId="EBI-11141397">
        <id>Q9UBQ0-2</id>
    </interactant>
    <interactant intactId="EBI-476586">
        <id>P17612</id>
        <label>PRKACA</label>
    </interactant>
    <organismsDiffer>false</organismsDiffer>
    <experiments>3</experiments>
</comment>
<comment type="interaction">
    <interactant intactId="EBI-11141397">
        <id>Q9UBQ0-2</id>
    </interactant>
    <interactant intactId="EBI-704279">
        <id>Q05655</id>
        <label>PRKCD</label>
    </interactant>
    <organismsDiffer>false</organismsDiffer>
    <experiments>3</experiments>
</comment>
<comment type="interaction">
    <interactant intactId="EBI-11141397">
        <id>Q9UBQ0-2</id>
    </interactant>
    <interactant intactId="EBI-21251460">
        <id>O60260-5</id>
        <label>PRKN</label>
    </interactant>
    <organismsDiffer>false</organismsDiffer>
    <experiments>3</experiments>
</comment>
<comment type="interaction">
    <interactant intactId="EBI-11141397">
        <id>Q9UBQ0-2</id>
    </interactant>
    <interactant intactId="EBI-413628">
        <id>P63000</id>
        <label>RAC1</label>
    </interactant>
    <organismsDiffer>false</organismsDiffer>
    <experiments>3</experiments>
</comment>
<comment type="interaction">
    <interactant intactId="EBI-11141397">
        <id>Q9UBQ0-2</id>
    </interactant>
    <interactant intactId="EBI-296557">
        <id>P01011</id>
        <label>SERPINA3</label>
    </interactant>
    <organismsDiffer>false</organismsDiffer>
    <experiments>3</experiments>
</comment>
<comment type="interaction">
    <interactant intactId="EBI-11141397">
        <id>Q9UBQ0-2</id>
    </interactant>
    <interactant intactId="EBI-985879">
        <id>P37840</id>
        <label>SNCA</label>
    </interactant>
    <organismsDiffer>false</organismsDiffer>
    <experiments>3</experiments>
</comment>
<comment type="interaction">
    <interactant intactId="EBI-11141397">
        <id>Q9UBQ0-2</id>
    </interactant>
    <interactant intactId="EBI-1057058">
        <id>Q99523</id>
        <label>SORT1</label>
    </interactant>
    <organismsDiffer>false</organismsDiffer>
    <experiments>3</experiments>
</comment>
<comment type="interaction">
    <interactant intactId="EBI-11141397">
        <id>Q9UBQ0-2</id>
    </interactant>
    <interactant intactId="EBI-307104">
        <id>Q13501</id>
        <label>SQSTM1</label>
    </interactant>
    <organismsDiffer>false</organismsDiffer>
    <experiments>3</experiments>
</comment>
<comment type="interaction">
    <interactant intactId="EBI-11141397">
        <id>Q9UBQ0-2</id>
    </interactant>
    <interactant intactId="EBI-357085">
        <id>Q9UNE7</id>
        <label>STUB1</label>
    </interactant>
    <organismsDiffer>false</organismsDiffer>
    <experiments>3</experiments>
</comment>
<comment type="interaction">
    <interactant intactId="EBI-11141397">
        <id>Q9UBQ0-2</id>
    </interactant>
    <interactant intactId="EBI-714215">
        <id>Q15583</id>
        <label>TGIF1</label>
    </interactant>
    <organismsDiffer>false</organismsDiffer>
    <experiments>3</experiments>
</comment>
<comment type="interaction">
    <interactant intactId="EBI-11141397">
        <id>Q9UBQ0-2</id>
    </interactant>
    <interactant intactId="EBI-6530446">
        <id>Q5TGY1</id>
        <label>TMCO4</label>
    </interactant>
    <organismsDiffer>false</organismsDiffer>
    <experiments>5</experiments>
</comment>
<comment type="interaction">
    <interactant intactId="EBI-11141397">
        <id>Q9UBQ0-2</id>
    </interactant>
    <interactant intactId="EBI-1054634">
        <id>Q96QK1</id>
        <label>VPS35</label>
    </interactant>
    <organismsDiffer>false</organismsDiffer>
    <experiments>4</experiments>
</comment>
<comment type="subcellular location">
    <subcellularLocation>
        <location>Cytoplasm</location>
    </subcellularLocation>
    <subcellularLocation>
        <location>Membrane</location>
        <topology>Peripheral membrane protein</topology>
    </subcellularLocation>
    <subcellularLocation>
        <location evidence="2">Endosome membrane</location>
        <topology evidence="2">Peripheral membrane protein</topology>
    </subcellularLocation>
    <subcellularLocation>
        <location evidence="27">Early endosome</location>
    </subcellularLocation>
    <subcellularLocation>
        <location evidence="27">Late endosome</location>
    </subcellularLocation>
</comment>
<comment type="alternative products">
    <event type="alternative splicing"/>
    <isoform>
        <id>Q9UBQ0-1</id>
        <name>1</name>
        <sequence type="displayed"/>
    </isoform>
    <isoform>
        <id>Q9UBQ0-2</id>
        <name>2</name>
        <sequence type="described" ref="VSP_004073"/>
    </isoform>
</comment>
<comment type="tissue specificity">
    <text>Ubiquitous. Highly expressed in heart, lung, placenta, spleen, peripheral blood leukocytes, thymus, colon skeletal muscle, kidney and brain.</text>
</comment>
<comment type="similarity">
    <text evidence="27">Belongs to the VPS29 family.</text>
</comment>
<comment type="caution">
    <text evidence="20 21">Was originally believed to be a metal-dependent phosphatase but shown to lack catalytic activity; can bind metals with very low affinity suggesting that metal binding is not required for its function.</text>
</comment>
<protein>
    <recommendedName>
        <fullName>Vacuolar protein sorting-associated protein 29</fullName>
        <shortName>hVPS29</shortName>
    </recommendedName>
    <alternativeName>
        <fullName>PEP11 homolog</fullName>
    </alternativeName>
    <alternativeName>
        <fullName>Vesicle protein sorting 29</fullName>
    </alternativeName>
</protein>
<accession>Q9UBQ0</accession>
<accession>Q502Y5</accession>
<accession>Q6FIF8</accession>
<accession>Q6IAH3</accession>
<accession>Q9H0W0</accession>
<accession>Q9NRP1</accession>
<accession>Q9NRU7</accession>
<name>VPS29_HUMAN</name>
<organism>
    <name type="scientific">Homo sapiens</name>
    <name type="common">Human</name>
    <dbReference type="NCBI Taxonomy" id="9606"/>
    <lineage>
        <taxon>Eukaryota</taxon>
        <taxon>Metazoa</taxon>
        <taxon>Chordata</taxon>
        <taxon>Craniata</taxon>
        <taxon>Vertebrata</taxon>
        <taxon>Euteleostomi</taxon>
        <taxon>Mammalia</taxon>
        <taxon>Eutheria</taxon>
        <taxon>Euarchontoglires</taxon>
        <taxon>Primates</taxon>
        <taxon>Haplorrhini</taxon>
        <taxon>Catarrhini</taxon>
        <taxon>Hominidae</taxon>
        <taxon>Homo</taxon>
    </lineage>
</organism>